<keyword id="KW-0460">Magnesium</keyword>
<keyword id="KW-0479">Metal-binding</keyword>
<keyword id="KW-0489">Methyltransferase</keyword>
<keyword id="KW-1185">Reference proteome</keyword>
<keyword id="KW-0949">S-adenosyl-L-methionine</keyword>
<keyword id="KW-0808">Transferase</keyword>
<evidence type="ECO:0000250" key="1">
    <source>
        <dbReference type="UniProtKB" id="A4GE69"/>
    </source>
</evidence>
<evidence type="ECO:0000250" key="2">
    <source>
        <dbReference type="UniProtKB" id="A4GE70"/>
    </source>
</evidence>
<evidence type="ECO:0000250" key="3">
    <source>
        <dbReference type="UniProtKB" id="Q9FLN8"/>
    </source>
</evidence>
<evidence type="ECO:0000269" key="4">
    <source>
    </source>
</evidence>
<evidence type="ECO:0000269" key="5">
    <source>
    </source>
</evidence>
<evidence type="ECO:0000303" key="6">
    <source>
    </source>
</evidence>
<evidence type="ECO:0000305" key="7"/>
<evidence type="ECO:0000312" key="8">
    <source>
        <dbReference type="Araport" id="AT3G44860"/>
    </source>
</evidence>
<evidence type="ECO:0000312" key="9">
    <source>
        <dbReference type="EMBL" id="CAC03536.1"/>
    </source>
</evidence>
<comment type="function">
    <text evidence="6">May catalyze the production of the insect juvenile hormone methyl farnesoate (MeFA) to trigger defense against insect herbivory.</text>
</comment>
<comment type="catalytic activity">
    <reaction evidence="5">
        <text>(2E,6E)-farnesoate + S-adenosyl-L-methionine = methyl (2E,6E)-farnesoate + S-adenosyl-L-homocysteine</text>
        <dbReference type="Rhea" id="RHEA:43700"/>
        <dbReference type="ChEBI" id="CHEBI:57856"/>
        <dbReference type="ChEBI" id="CHEBI:59789"/>
        <dbReference type="ChEBI" id="CHEBI:80535"/>
        <dbReference type="ChEBI" id="CHEBI:83276"/>
        <dbReference type="EC" id="2.1.1.325"/>
    </reaction>
</comment>
<comment type="catalytic activity">
    <reaction evidence="5">
        <text>juvenile hormone III carboxylate + S-adenosyl-L-methionine = juvenile hormone III + S-adenosyl-L-homocysteine</text>
        <dbReference type="Rhea" id="RHEA:43720"/>
        <dbReference type="ChEBI" id="CHEBI:27493"/>
        <dbReference type="ChEBI" id="CHEBI:57856"/>
        <dbReference type="ChEBI" id="CHEBI:59789"/>
        <dbReference type="ChEBI" id="CHEBI:83274"/>
        <dbReference type="EC" id="2.1.1.325"/>
    </reaction>
</comment>
<comment type="cofactor">
    <cofactor evidence="3">
        <name>Mg(2+)</name>
        <dbReference type="ChEBI" id="CHEBI:18420"/>
    </cofactor>
    <text evidence="3">Binds 1 Mg(2+) ion per subunit.</text>
</comment>
<comment type="activity regulation">
    <text evidence="5">Activated by Mn(2+) ions. Strongly inhibited by Cu(2+), Zn(2+), Fe(3+) and Fe(2+) ions. Moderately inhibited by Na(+) and Ca(2+) ions. Rapidly degraded at temperatures above 40 degrees Celsius.</text>
</comment>
<comment type="biophysicochemical properties">
    <kinetics>
        <KM evidence="5">41 uM for farnesoic acid</KM>
        <KM evidence="5">71 uM for S-adenosyl-L-methionine</KM>
        <text evidence="5">kcat is 0.004 sec(-1) with farnesoic acid as substrate.</text>
    </kinetics>
    <phDependence>
        <text evidence="5">Optimum pH is 8-8.5.</text>
    </phDependence>
</comment>
<comment type="pathway">
    <text evidence="5">Sesquiterpene biosynthesis.</text>
</comment>
<comment type="subunit">
    <text evidence="3">Homodimer.</text>
</comment>
<comment type="tissue specificity">
    <text evidence="5">Mostly expressed in leaves and, at very low levels, in roots, stems, flowers and siliques.</text>
</comment>
<comment type="induction">
    <text evidence="4 5">Induced in the presence of the herbivory P.xylostella larvae (PubMed:14617060). Accumulates slighty in response to wounding and to several defense responses-inducing compounds including salicylic acid (SA), jasmonic acid (MeJA) and alamethicin (Ala), an antibiotic peptide of fungal origin (PubMed:16165084).</text>
</comment>
<comment type="similarity">
    <text evidence="7">Belongs to the methyltransferase superfamily. SABATH family.</text>
</comment>
<feature type="chain" id="PRO_0000440977" description="Farnesoic acid carboxyl-O-methyltransferase">
    <location>
        <begin position="1"/>
        <end position="348"/>
    </location>
</feature>
<feature type="binding site" evidence="2">
    <location>
        <position position="16"/>
    </location>
    <ligand>
        <name>S-adenosyl-L-methionine</name>
        <dbReference type="ChEBI" id="CHEBI:59789"/>
    </ligand>
</feature>
<feature type="binding site" evidence="2">
    <location>
        <position position="16"/>
    </location>
    <ligand>
        <name>substrate</name>
    </ligand>
</feature>
<feature type="binding site" evidence="1">
    <location>
        <begin position="19"/>
        <end position="23"/>
    </location>
    <ligand>
        <name>substrate</name>
    </ligand>
</feature>
<feature type="binding site" evidence="3">
    <location>
        <begin position="57"/>
        <end position="58"/>
    </location>
    <ligand>
        <name>S-adenosyl-L-methionine</name>
        <dbReference type="ChEBI" id="CHEBI:59789"/>
    </ligand>
</feature>
<feature type="binding site" evidence="1">
    <location>
        <position position="57"/>
    </location>
    <ligand>
        <name>S-adenosyl-L-methionine</name>
        <dbReference type="ChEBI" id="CHEBI:59789"/>
    </ligand>
</feature>
<feature type="binding site" evidence="2">
    <location>
        <position position="63"/>
    </location>
    <ligand>
        <name>S-adenosyl-L-methionine</name>
        <dbReference type="ChEBI" id="CHEBI:59789"/>
    </ligand>
</feature>
<feature type="binding site" evidence="2">
    <location>
        <begin position="94"/>
        <end position="97"/>
    </location>
    <ligand>
        <name>S-adenosyl-L-methionine</name>
        <dbReference type="ChEBI" id="CHEBI:59789"/>
    </ligand>
</feature>
<feature type="binding site" evidence="3">
    <location>
        <begin position="123"/>
        <end position="125"/>
    </location>
    <ligand>
        <name>S-adenosyl-L-methionine</name>
        <dbReference type="ChEBI" id="CHEBI:59789"/>
    </ligand>
</feature>
<feature type="binding site" evidence="3">
    <location>
        <begin position="140"/>
        <end position="142"/>
    </location>
    <ligand>
        <name>S-adenosyl-L-methionine</name>
        <dbReference type="ChEBI" id="CHEBI:59789"/>
    </ligand>
</feature>
<feature type="binding site" evidence="2">
    <location>
        <begin position="141"/>
        <end position="145"/>
    </location>
    <ligand>
        <name>substrate</name>
    </ligand>
</feature>
<feature type="binding site" evidence="3">
    <location>
        <position position="162"/>
    </location>
    <ligand>
        <name>Mg(2+)</name>
        <dbReference type="ChEBI" id="CHEBI:18420"/>
    </ligand>
</feature>
<feature type="binding site" evidence="3">
    <location>
        <position position="247"/>
    </location>
    <ligand>
        <name>Mg(2+)</name>
        <dbReference type="ChEBI" id="CHEBI:18420"/>
    </ligand>
</feature>
<feature type="binding site" evidence="3">
    <location>
        <position position="249"/>
    </location>
    <ligand>
        <name>Mg(2+)</name>
        <dbReference type="ChEBI" id="CHEBI:18420"/>
    </ligand>
</feature>
<feature type="sequence conflict" description="In Ref. 3; AAK93646." evidence="7" ref="3">
    <original>V</original>
    <variation>F</variation>
    <location>
        <position position="149"/>
    </location>
</feature>
<sequence length="348" mass="38515">MSTSFTMIGGEGPNSYREHSKYQGALVIAAKEKINEAISTKLDIDFTSNLVNIADFGCSSGPNTFTAVQTLIDAVENKYKKESNIEGIEFQVFFNDSSNNDFNTLFKTLPPARLYFASGVPGSFFGRVLPKNSLHVGVSSYSLHFVSKVPKEIKDRDSLVWNKDIHCSGSSKEVVKLYLGQYKIDVGSFLTARAQELVSGGLLLLLGSCRPTGVQMFETVEGMMIDFIGSSLNEIANQGLIDQQKLDTFKLPIYAPNVDELKQIIEDNKCFTIEAFEKISHAKGEYPLDPEYLTSAFKVTVGGSVASLFGQDGMEKTYELVKEKTQEMLPQIAKAKPGMQYLIVLRRN</sequence>
<name>FAMT_ARATH</name>
<dbReference type="EC" id="2.1.1.325" evidence="5"/>
<dbReference type="EMBL" id="AL391254">
    <property type="protein sequence ID" value="CAC03536.1"/>
    <property type="molecule type" value="Genomic_DNA"/>
</dbReference>
<dbReference type="EMBL" id="CP002686">
    <property type="protein sequence ID" value="AEE77962.1"/>
    <property type="molecule type" value="Genomic_DNA"/>
</dbReference>
<dbReference type="EMBL" id="AY050969">
    <property type="protein sequence ID" value="AAK93646.1"/>
    <property type="molecule type" value="mRNA"/>
</dbReference>
<dbReference type="EMBL" id="AY150400">
    <property type="protein sequence ID" value="AAN12945.1"/>
    <property type="molecule type" value="mRNA"/>
</dbReference>
<dbReference type="PIR" id="T51783">
    <property type="entry name" value="T51783"/>
</dbReference>
<dbReference type="RefSeq" id="NP_190072.1">
    <property type="nucleotide sequence ID" value="NM_114355.3"/>
</dbReference>
<dbReference type="SMR" id="Q9FYC4"/>
<dbReference type="FunCoup" id="Q9FYC4">
    <property type="interactions" value="3"/>
</dbReference>
<dbReference type="STRING" id="3702.Q9FYC4"/>
<dbReference type="PaxDb" id="3702-AT3G44860.1"/>
<dbReference type="ProteomicsDB" id="222378"/>
<dbReference type="DNASU" id="823620"/>
<dbReference type="EnsemblPlants" id="AT3G44860.1">
    <property type="protein sequence ID" value="AT3G44860.1"/>
    <property type="gene ID" value="AT3G44860"/>
</dbReference>
<dbReference type="GeneID" id="823620"/>
<dbReference type="Gramene" id="AT3G44860.1">
    <property type="protein sequence ID" value="AT3G44860.1"/>
    <property type="gene ID" value="AT3G44860"/>
</dbReference>
<dbReference type="KEGG" id="ath:AT3G44860"/>
<dbReference type="Araport" id="AT3G44860"/>
<dbReference type="TAIR" id="AT3G44860">
    <property type="gene designation" value="FAMT"/>
</dbReference>
<dbReference type="eggNOG" id="ENOG502QUIN">
    <property type="taxonomic scope" value="Eukaryota"/>
</dbReference>
<dbReference type="HOGENOM" id="CLU_019628_1_0_1"/>
<dbReference type="InParanoid" id="Q9FYC4"/>
<dbReference type="OMA" id="CFRTEVF"/>
<dbReference type="PhylomeDB" id="Q9FYC4"/>
<dbReference type="BioCyc" id="ARA:AT3G44860-MONOMER"/>
<dbReference type="BioCyc" id="MetaCyc:AT3G44860-MONOMER"/>
<dbReference type="PRO" id="PR:Q9FYC4"/>
<dbReference type="Proteomes" id="UP000006548">
    <property type="component" value="Chromosome 3"/>
</dbReference>
<dbReference type="ExpressionAtlas" id="Q9FYC4">
    <property type="expression patterns" value="baseline and differential"/>
</dbReference>
<dbReference type="GO" id="GO:0019010">
    <property type="term" value="F:farnesoic acid O-methyltransferase activity"/>
    <property type="evidence" value="ECO:0000314"/>
    <property type="project" value="TAIR"/>
</dbReference>
<dbReference type="GO" id="GO:0046872">
    <property type="term" value="F:metal ion binding"/>
    <property type="evidence" value="ECO:0007669"/>
    <property type="project" value="UniProtKB-KW"/>
</dbReference>
<dbReference type="GO" id="GO:0032259">
    <property type="term" value="P:methylation"/>
    <property type="evidence" value="ECO:0007669"/>
    <property type="project" value="UniProtKB-KW"/>
</dbReference>
<dbReference type="GO" id="GO:0080027">
    <property type="term" value="P:response to herbivore"/>
    <property type="evidence" value="ECO:0000270"/>
    <property type="project" value="UniProtKB"/>
</dbReference>
<dbReference type="GO" id="GO:0009753">
    <property type="term" value="P:response to jasmonic acid"/>
    <property type="evidence" value="ECO:0000270"/>
    <property type="project" value="UniProtKB"/>
</dbReference>
<dbReference type="GO" id="GO:0002238">
    <property type="term" value="P:response to molecule of fungal origin"/>
    <property type="evidence" value="ECO:0000270"/>
    <property type="project" value="UniProtKB"/>
</dbReference>
<dbReference type="GO" id="GO:0009751">
    <property type="term" value="P:response to salicylic acid"/>
    <property type="evidence" value="ECO:0000270"/>
    <property type="project" value="UniProtKB"/>
</dbReference>
<dbReference type="GO" id="GO:0009611">
    <property type="term" value="P:response to wounding"/>
    <property type="evidence" value="ECO:0000270"/>
    <property type="project" value="UniProtKB"/>
</dbReference>
<dbReference type="Gene3D" id="1.10.1200.270">
    <property type="entry name" value="Methyltransferase, alpha-helical capping domain"/>
    <property type="match status" value="1"/>
</dbReference>
<dbReference type="Gene3D" id="3.40.50.150">
    <property type="entry name" value="Vaccinia Virus protein VP39"/>
    <property type="match status" value="1"/>
</dbReference>
<dbReference type="InterPro" id="IPR005299">
    <property type="entry name" value="MeTrfase_7"/>
</dbReference>
<dbReference type="InterPro" id="IPR042086">
    <property type="entry name" value="MeTrfase_capping"/>
</dbReference>
<dbReference type="InterPro" id="IPR029063">
    <property type="entry name" value="SAM-dependent_MTases_sf"/>
</dbReference>
<dbReference type="PANTHER" id="PTHR31009">
    <property type="entry name" value="S-ADENOSYL-L-METHIONINE:CARBOXYL METHYLTRANSFERASE FAMILY PROTEIN"/>
    <property type="match status" value="1"/>
</dbReference>
<dbReference type="Pfam" id="PF03492">
    <property type="entry name" value="Methyltransf_7"/>
    <property type="match status" value="1"/>
</dbReference>
<dbReference type="SUPFAM" id="SSF53335">
    <property type="entry name" value="S-adenosyl-L-methionine-dependent methyltransferases"/>
    <property type="match status" value="1"/>
</dbReference>
<protein>
    <recommendedName>
        <fullName evidence="6">Farnesoic acid carboxyl-O-methyltransferase</fullName>
        <ecNumber evidence="5">2.1.1.325</ecNumber>
    </recommendedName>
    <alternativeName>
        <fullName evidence="7">SABATH methyltransferase FAMT</fullName>
    </alternativeName>
</protein>
<reference key="1">
    <citation type="journal article" date="2000" name="Nature">
        <title>Sequence and analysis of chromosome 3 of the plant Arabidopsis thaliana.</title>
        <authorList>
            <person name="Salanoubat M."/>
            <person name="Lemcke K."/>
            <person name="Rieger M."/>
            <person name="Ansorge W."/>
            <person name="Unseld M."/>
            <person name="Fartmann B."/>
            <person name="Valle G."/>
            <person name="Bloecker H."/>
            <person name="Perez-Alonso M."/>
            <person name="Obermaier B."/>
            <person name="Delseny M."/>
            <person name="Boutry M."/>
            <person name="Grivell L.A."/>
            <person name="Mache R."/>
            <person name="Puigdomenech P."/>
            <person name="De Simone V."/>
            <person name="Choisne N."/>
            <person name="Artiguenave F."/>
            <person name="Robert C."/>
            <person name="Brottier P."/>
            <person name="Wincker P."/>
            <person name="Cattolico L."/>
            <person name="Weissenbach J."/>
            <person name="Saurin W."/>
            <person name="Quetier F."/>
            <person name="Schaefer M."/>
            <person name="Mueller-Auer S."/>
            <person name="Gabel C."/>
            <person name="Fuchs M."/>
            <person name="Benes V."/>
            <person name="Wurmbach E."/>
            <person name="Drzonek H."/>
            <person name="Erfle H."/>
            <person name="Jordan N."/>
            <person name="Bangert S."/>
            <person name="Wiedelmann R."/>
            <person name="Kranz H."/>
            <person name="Voss H."/>
            <person name="Holland R."/>
            <person name="Brandt P."/>
            <person name="Nyakatura G."/>
            <person name="Vezzi A."/>
            <person name="D'Angelo M."/>
            <person name="Pallavicini A."/>
            <person name="Toppo S."/>
            <person name="Simionati B."/>
            <person name="Conrad A."/>
            <person name="Hornischer K."/>
            <person name="Kauer G."/>
            <person name="Loehnert T.-H."/>
            <person name="Nordsiek G."/>
            <person name="Reichelt J."/>
            <person name="Scharfe M."/>
            <person name="Schoen O."/>
            <person name="Bargues M."/>
            <person name="Terol J."/>
            <person name="Climent J."/>
            <person name="Navarro P."/>
            <person name="Collado C."/>
            <person name="Perez-Perez A."/>
            <person name="Ottenwaelder B."/>
            <person name="Duchemin D."/>
            <person name="Cooke R."/>
            <person name="Laudie M."/>
            <person name="Berger-Llauro C."/>
            <person name="Purnelle B."/>
            <person name="Masuy D."/>
            <person name="de Haan M."/>
            <person name="Maarse A.C."/>
            <person name="Alcaraz J.-P."/>
            <person name="Cottet A."/>
            <person name="Casacuberta E."/>
            <person name="Monfort A."/>
            <person name="Argiriou A."/>
            <person name="Flores M."/>
            <person name="Liguori R."/>
            <person name="Vitale D."/>
            <person name="Mannhaupt G."/>
            <person name="Haase D."/>
            <person name="Schoof H."/>
            <person name="Rudd S."/>
            <person name="Zaccaria P."/>
            <person name="Mewes H.-W."/>
            <person name="Mayer K.F.X."/>
            <person name="Kaul S."/>
            <person name="Town C.D."/>
            <person name="Koo H.L."/>
            <person name="Tallon L.J."/>
            <person name="Jenkins J."/>
            <person name="Rooney T."/>
            <person name="Rizzo M."/>
            <person name="Walts A."/>
            <person name="Utterback T."/>
            <person name="Fujii C.Y."/>
            <person name="Shea T.P."/>
            <person name="Creasy T.H."/>
            <person name="Haas B."/>
            <person name="Maiti R."/>
            <person name="Wu D."/>
            <person name="Peterson J."/>
            <person name="Van Aken S."/>
            <person name="Pai G."/>
            <person name="Militscher J."/>
            <person name="Sellers P."/>
            <person name="Gill J.E."/>
            <person name="Feldblyum T.V."/>
            <person name="Preuss D."/>
            <person name="Lin X."/>
            <person name="Nierman W.C."/>
            <person name="Salzberg S.L."/>
            <person name="White O."/>
            <person name="Venter J.C."/>
            <person name="Fraser C.M."/>
            <person name="Kaneko T."/>
            <person name="Nakamura Y."/>
            <person name="Sato S."/>
            <person name="Kato T."/>
            <person name="Asamizu E."/>
            <person name="Sasamoto S."/>
            <person name="Kimura T."/>
            <person name="Idesawa K."/>
            <person name="Kawashima K."/>
            <person name="Kishida Y."/>
            <person name="Kiyokawa C."/>
            <person name="Kohara M."/>
            <person name="Matsumoto M."/>
            <person name="Matsuno A."/>
            <person name="Muraki A."/>
            <person name="Nakayama S."/>
            <person name="Nakazaki N."/>
            <person name="Shinpo S."/>
            <person name="Takeuchi C."/>
            <person name="Wada T."/>
            <person name="Watanabe A."/>
            <person name="Yamada M."/>
            <person name="Yasuda M."/>
            <person name="Tabata S."/>
        </authorList>
    </citation>
    <scope>NUCLEOTIDE SEQUENCE [LARGE SCALE GENOMIC DNA]</scope>
    <source>
        <strain>cv. Columbia</strain>
    </source>
</reference>
<reference key="2">
    <citation type="journal article" date="2017" name="Plant J.">
        <title>Araport11: a complete reannotation of the Arabidopsis thaliana reference genome.</title>
        <authorList>
            <person name="Cheng C.Y."/>
            <person name="Krishnakumar V."/>
            <person name="Chan A.P."/>
            <person name="Thibaud-Nissen F."/>
            <person name="Schobel S."/>
            <person name="Town C.D."/>
        </authorList>
    </citation>
    <scope>GENOME REANNOTATION</scope>
    <source>
        <strain>cv. Columbia</strain>
    </source>
</reference>
<reference key="3">
    <citation type="journal article" date="2003" name="Science">
        <title>Empirical analysis of transcriptional activity in the Arabidopsis genome.</title>
        <authorList>
            <person name="Yamada K."/>
            <person name="Lim J."/>
            <person name="Dale J.M."/>
            <person name="Chen H."/>
            <person name="Shinn P."/>
            <person name="Palm C.J."/>
            <person name="Southwick A.M."/>
            <person name="Wu H.C."/>
            <person name="Kim C.J."/>
            <person name="Nguyen M."/>
            <person name="Pham P.K."/>
            <person name="Cheuk R.F."/>
            <person name="Karlin-Newmann G."/>
            <person name="Liu S.X."/>
            <person name="Lam B."/>
            <person name="Sakano H."/>
            <person name="Wu T."/>
            <person name="Yu G."/>
            <person name="Miranda M."/>
            <person name="Quach H.L."/>
            <person name="Tripp M."/>
            <person name="Chang C.H."/>
            <person name="Lee J.M."/>
            <person name="Toriumi M.J."/>
            <person name="Chan M.M."/>
            <person name="Tang C.C."/>
            <person name="Onodera C.S."/>
            <person name="Deng J.M."/>
            <person name="Akiyama K."/>
            <person name="Ansari Y."/>
            <person name="Arakawa T."/>
            <person name="Banh J."/>
            <person name="Banno F."/>
            <person name="Bowser L."/>
            <person name="Brooks S.Y."/>
            <person name="Carninci P."/>
            <person name="Chao Q."/>
            <person name="Choy N."/>
            <person name="Enju A."/>
            <person name="Goldsmith A.D."/>
            <person name="Gurjal M."/>
            <person name="Hansen N.F."/>
            <person name="Hayashizaki Y."/>
            <person name="Johnson-Hopson C."/>
            <person name="Hsuan V.W."/>
            <person name="Iida K."/>
            <person name="Karnes M."/>
            <person name="Khan S."/>
            <person name="Koesema E."/>
            <person name="Ishida J."/>
            <person name="Jiang P.X."/>
            <person name="Jones T."/>
            <person name="Kawai J."/>
            <person name="Kamiya A."/>
            <person name="Meyers C."/>
            <person name="Nakajima M."/>
            <person name="Narusaka M."/>
            <person name="Seki M."/>
            <person name="Sakurai T."/>
            <person name="Satou M."/>
            <person name="Tamse R."/>
            <person name="Vaysberg M."/>
            <person name="Wallender E.K."/>
            <person name="Wong C."/>
            <person name="Yamamura Y."/>
            <person name="Yuan S."/>
            <person name="Shinozaki K."/>
            <person name="Davis R.W."/>
            <person name="Theologis A."/>
            <person name="Ecker J.R."/>
        </authorList>
    </citation>
    <scope>NUCLEOTIDE SEQUENCE [LARGE SCALE MRNA]</scope>
    <source>
        <strain>cv. Columbia</strain>
    </source>
</reference>
<reference key="4">
    <citation type="journal article" date="2003" name="Plant J.">
        <title>An Arabidopsis thaliana gene for methylsalicylate biosynthesis, identified by a biochemical genomics approach, has a role in defense.</title>
        <authorList>
            <person name="Chen F."/>
            <person name="D'Auria J.C."/>
            <person name="Tholl D."/>
            <person name="Ross J.R."/>
            <person name="Gershenzon J."/>
            <person name="Noel J.P."/>
            <person name="Pichersky E."/>
        </authorList>
    </citation>
    <scope>INDUCTION BY HERBIVORY</scope>
    <scope>GENE FAMILY</scope>
    <source>
        <strain>cv. Columbia</strain>
    </source>
</reference>
<reference key="5">
    <citation type="journal article" date="2006" name="Arch. Biochem. Biophys.">
        <title>An Arabidopsis thaliana methyltransferase capable of methylating farnesoic acid.</title>
        <authorList>
            <person name="Yang Y."/>
            <person name="Yuan J.S."/>
            <person name="Ross J."/>
            <person name="Noel J.P."/>
            <person name="Pichersky E."/>
            <person name="Chen F."/>
        </authorList>
    </citation>
    <scope>FUNCTION</scope>
    <scope>CATALYTIC ACTIVITY</scope>
    <scope>BIOPHYSICOCHEMICAL PROPERTIES</scope>
    <scope>INDUCTION BY WOUNDING; SALICYLIC ACID; JASMONIC ACID AND ALAMETHICIN</scope>
    <scope>ACTIVITY REGULATION</scope>
    <scope>TISSUE SPECIFICITY</scope>
    <source>
        <strain>cv. Columbia</strain>
    </source>
</reference>
<gene>
    <name evidence="6" type="primary">FAMT</name>
    <name evidence="8" type="ordered locus">At3g44860</name>
    <name evidence="9" type="ORF">F28D10.50</name>
</gene>
<organism>
    <name type="scientific">Arabidopsis thaliana</name>
    <name type="common">Mouse-ear cress</name>
    <dbReference type="NCBI Taxonomy" id="3702"/>
    <lineage>
        <taxon>Eukaryota</taxon>
        <taxon>Viridiplantae</taxon>
        <taxon>Streptophyta</taxon>
        <taxon>Embryophyta</taxon>
        <taxon>Tracheophyta</taxon>
        <taxon>Spermatophyta</taxon>
        <taxon>Magnoliopsida</taxon>
        <taxon>eudicotyledons</taxon>
        <taxon>Gunneridae</taxon>
        <taxon>Pentapetalae</taxon>
        <taxon>rosids</taxon>
        <taxon>malvids</taxon>
        <taxon>Brassicales</taxon>
        <taxon>Brassicaceae</taxon>
        <taxon>Camelineae</taxon>
        <taxon>Arabidopsis</taxon>
    </lineage>
</organism>
<accession>Q9FYC4</accession>
<accession>Q949P9</accession>
<proteinExistence type="evidence at protein level"/>